<accession>B1IWD4</accession>
<protein>
    <recommendedName>
        <fullName evidence="1">Co-chaperone protein HscB</fullName>
    </recommendedName>
    <alternativeName>
        <fullName evidence="1">Hsc20</fullName>
    </alternativeName>
</protein>
<comment type="function">
    <text evidence="1">Co-chaperone involved in the maturation of iron-sulfur cluster-containing proteins. Seems to help targeting proteins to be folded toward HscA.</text>
</comment>
<comment type="subunit">
    <text evidence="1">Interacts with HscA and stimulates its ATPase activity. Interacts with IscU.</text>
</comment>
<comment type="similarity">
    <text evidence="1">Belongs to the HscB family.</text>
</comment>
<gene>
    <name evidence="1" type="primary">hscB</name>
    <name type="ordered locus">EcolC_1150</name>
</gene>
<reference key="1">
    <citation type="submission" date="2008-02" db="EMBL/GenBank/DDBJ databases">
        <title>Complete sequence of Escherichia coli C str. ATCC 8739.</title>
        <authorList>
            <person name="Copeland A."/>
            <person name="Lucas S."/>
            <person name="Lapidus A."/>
            <person name="Glavina del Rio T."/>
            <person name="Dalin E."/>
            <person name="Tice H."/>
            <person name="Bruce D."/>
            <person name="Goodwin L."/>
            <person name="Pitluck S."/>
            <person name="Kiss H."/>
            <person name="Brettin T."/>
            <person name="Detter J.C."/>
            <person name="Han C."/>
            <person name="Kuske C.R."/>
            <person name="Schmutz J."/>
            <person name="Larimer F."/>
            <person name="Land M."/>
            <person name="Hauser L."/>
            <person name="Kyrpides N."/>
            <person name="Mikhailova N."/>
            <person name="Ingram L."/>
            <person name="Richardson P."/>
        </authorList>
    </citation>
    <scope>NUCLEOTIDE SEQUENCE [LARGE SCALE GENOMIC DNA]</scope>
    <source>
        <strain>ATCC 8739 / DSM 1576 / NBRC 3972 / NCIMB 8545 / WDCM 00012 / Crooks</strain>
    </source>
</reference>
<dbReference type="EMBL" id="CP000946">
    <property type="protein sequence ID" value="ACA76817.1"/>
    <property type="molecule type" value="Genomic_DNA"/>
</dbReference>
<dbReference type="RefSeq" id="WP_000384413.1">
    <property type="nucleotide sequence ID" value="NZ_MTFT01000002.1"/>
</dbReference>
<dbReference type="BMRB" id="B1IWD4"/>
<dbReference type="SMR" id="B1IWD4"/>
<dbReference type="GeneID" id="75172640"/>
<dbReference type="KEGG" id="ecl:EcolC_1150"/>
<dbReference type="HOGENOM" id="CLU_068529_2_0_6"/>
<dbReference type="GO" id="GO:1990230">
    <property type="term" value="C:iron-sulfur cluster transfer complex"/>
    <property type="evidence" value="ECO:0007669"/>
    <property type="project" value="TreeGrafter"/>
</dbReference>
<dbReference type="GO" id="GO:0001671">
    <property type="term" value="F:ATPase activator activity"/>
    <property type="evidence" value="ECO:0007669"/>
    <property type="project" value="InterPro"/>
</dbReference>
<dbReference type="GO" id="GO:0051087">
    <property type="term" value="F:protein-folding chaperone binding"/>
    <property type="evidence" value="ECO:0007669"/>
    <property type="project" value="InterPro"/>
</dbReference>
<dbReference type="GO" id="GO:0044571">
    <property type="term" value="P:[2Fe-2S] cluster assembly"/>
    <property type="evidence" value="ECO:0007669"/>
    <property type="project" value="InterPro"/>
</dbReference>
<dbReference type="GO" id="GO:0051259">
    <property type="term" value="P:protein complex oligomerization"/>
    <property type="evidence" value="ECO:0007669"/>
    <property type="project" value="InterPro"/>
</dbReference>
<dbReference type="GO" id="GO:0006457">
    <property type="term" value="P:protein folding"/>
    <property type="evidence" value="ECO:0007669"/>
    <property type="project" value="UniProtKB-UniRule"/>
</dbReference>
<dbReference type="CDD" id="cd06257">
    <property type="entry name" value="DnaJ"/>
    <property type="match status" value="1"/>
</dbReference>
<dbReference type="FunFam" id="1.10.287.110:FF:000008">
    <property type="entry name" value="Co-chaperone protein HscB"/>
    <property type="match status" value="1"/>
</dbReference>
<dbReference type="FunFam" id="1.20.1280.20:FF:000001">
    <property type="entry name" value="Co-chaperone protein HscB"/>
    <property type="match status" value="1"/>
</dbReference>
<dbReference type="Gene3D" id="1.10.287.110">
    <property type="entry name" value="DnaJ domain"/>
    <property type="match status" value="1"/>
</dbReference>
<dbReference type="Gene3D" id="1.20.1280.20">
    <property type="entry name" value="HscB, C-terminal domain"/>
    <property type="match status" value="1"/>
</dbReference>
<dbReference type="HAMAP" id="MF_00682">
    <property type="entry name" value="HscB"/>
    <property type="match status" value="1"/>
</dbReference>
<dbReference type="InterPro" id="IPR001623">
    <property type="entry name" value="DnaJ_domain"/>
</dbReference>
<dbReference type="InterPro" id="IPR004640">
    <property type="entry name" value="HscB"/>
</dbReference>
<dbReference type="InterPro" id="IPR036386">
    <property type="entry name" value="HscB_C_sf"/>
</dbReference>
<dbReference type="InterPro" id="IPR009073">
    <property type="entry name" value="HscB_oligo_C"/>
</dbReference>
<dbReference type="InterPro" id="IPR036869">
    <property type="entry name" value="J_dom_sf"/>
</dbReference>
<dbReference type="NCBIfam" id="TIGR00714">
    <property type="entry name" value="hscB"/>
    <property type="match status" value="1"/>
</dbReference>
<dbReference type="NCBIfam" id="NF003449">
    <property type="entry name" value="PRK05014.1"/>
    <property type="match status" value="1"/>
</dbReference>
<dbReference type="PANTHER" id="PTHR14021">
    <property type="entry name" value="IRON-SULFUR CLUSTER CO-CHAPERONE PROTEIN HSCB"/>
    <property type="match status" value="1"/>
</dbReference>
<dbReference type="PANTHER" id="PTHR14021:SF15">
    <property type="entry name" value="IRON-SULFUR CLUSTER CO-CHAPERONE PROTEIN HSCB"/>
    <property type="match status" value="1"/>
</dbReference>
<dbReference type="Pfam" id="PF07743">
    <property type="entry name" value="HSCB_C"/>
    <property type="match status" value="1"/>
</dbReference>
<dbReference type="SMART" id="SM00271">
    <property type="entry name" value="DnaJ"/>
    <property type="match status" value="1"/>
</dbReference>
<dbReference type="SUPFAM" id="SSF46565">
    <property type="entry name" value="Chaperone J-domain"/>
    <property type="match status" value="1"/>
</dbReference>
<dbReference type="SUPFAM" id="SSF47144">
    <property type="entry name" value="HSC20 (HSCB), C-terminal oligomerisation domain"/>
    <property type="match status" value="1"/>
</dbReference>
<dbReference type="PROSITE" id="PS50076">
    <property type="entry name" value="DNAJ_2"/>
    <property type="match status" value="1"/>
</dbReference>
<proteinExistence type="inferred from homology"/>
<keyword id="KW-0143">Chaperone</keyword>
<sequence>MDYFTLFGLPARYQLDTQALSLRFQDLQRQYHPDKFASGSQAEQLAAVQQSATINQAWQTLRHPLMRAEYLLSLHGFDLASEQHTVRDTAFLMEQLELREELDEIEQAKDEARLESFIKRVKKMFDTRHQLMVEQLDNETWDAAADTVRKLRFLDKLRSSAEQLEEKLLDF</sequence>
<name>HSCB_ECOLC</name>
<feature type="chain" id="PRO_1000083010" description="Co-chaperone protein HscB">
    <location>
        <begin position="1"/>
        <end position="171"/>
    </location>
</feature>
<feature type="domain" description="J" evidence="1">
    <location>
        <begin position="2"/>
        <end position="74"/>
    </location>
</feature>
<evidence type="ECO:0000255" key="1">
    <source>
        <dbReference type="HAMAP-Rule" id="MF_00682"/>
    </source>
</evidence>
<organism>
    <name type="scientific">Escherichia coli (strain ATCC 8739 / DSM 1576 / NBRC 3972 / NCIMB 8545 / WDCM 00012 / Crooks)</name>
    <dbReference type="NCBI Taxonomy" id="481805"/>
    <lineage>
        <taxon>Bacteria</taxon>
        <taxon>Pseudomonadati</taxon>
        <taxon>Pseudomonadota</taxon>
        <taxon>Gammaproteobacteria</taxon>
        <taxon>Enterobacterales</taxon>
        <taxon>Enterobacteriaceae</taxon>
        <taxon>Escherichia</taxon>
    </lineage>
</organism>